<gene>
    <name evidence="1" type="primary">TRM2</name>
    <name type="ordered locus">U35</name>
</gene>
<reference key="1">
    <citation type="journal article" date="1999" name="J. Virol.">
        <title>Human herpesvirus 6B genome sequence: coding content and comparison with human herpesvirus 6A.</title>
        <authorList>
            <person name="Dominguez G."/>
            <person name="Dambaugh T.R."/>
            <person name="Stamey F.R."/>
            <person name="Dewhurst S."/>
            <person name="Inoue N."/>
            <person name="Pellett P.E."/>
        </authorList>
    </citation>
    <scope>NUCLEOTIDE SEQUENCE [LARGE SCALE GENOMIC DNA]</scope>
</reference>
<organismHost>
    <name type="scientific">Homo sapiens</name>
    <name type="common">Human</name>
    <dbReference type="NCBI Taxonomy" id="9606"/>
</organismHost>
<organism>
    <name type="scientific">Human herpesvirus 6B (strain Z29)</name>
    <name type="common">HHV-6 variant B</name>
    <name type="synonym">Human B lymphotropic virus</name>
    <dbReference type="NCBI Taxonomy" id="36351"/>
    <lineage>
        <taxon>Viruses</taxon>
        <taxon>Duplodnaviria</taxon>
        <taxon>Heunggongvirae</taxon>
        <taxon>Peploviricota</taxon>
        <taxon>Herviviricetes</taxon>
        <taxon>Herpesvirales</taxon>
        <taxon>Orthoherpesviridae</taxon>
        <taxon>Betaherpesvirinae</taxon>
        <taxon>Roseolovirus</taxon>
        <taxon>Roseolovirus humanbeta6b</taxon>
        <taxon>Human herpesvirus 6B</taxon>
    </lineage>
</organism>
<feature type="chain" id="PRO_0000408415" description="Tripartite terminase subunit 2">
    <location>
        <begin position="1"/>
        <end position="106"/>
    </location>
</feature>
<evidence type="ECO:0000255" key="1">
    <source>
        <dbReference type="HAMAP-Rule" id="MF_04015"/>
    </source>
</evidence>
<accession>Q9QJ34</accession>
<sequence length="106" mass="12428">MMDSSPEKTNLELLYEQVCEQGREFEVVFYPMLPRLYEMMLPSLEARLNFLSVGYRHVAFSRYVHGDVDCVHREVMAQKMVLLTSILSKLLNVNGILEHQEYLNTE</sequence>
<dbReference type="EMBL" id="AF157706">
    <property type="protein sequence ID" value="AAD49649.1"/>
    <property type="molecule type" value="Genomic_DNA"/>
</dbReference>
<dbReference type="RefSeq" id="NP_050216.1">
    <property type="nucleotide sequence ID" value="NC_000898.1"/>
</dbReference>
<dbReference type="SMR" id="Q9QJ34"/>
<dbReference type="DNASU" id="1497037"/>
<dbReference type="GeneID" id="1497037"/>
<dbReference type="KEGG" id="vg:1497037"/>
<dbReference type="Proteomes" id="UP000006930">
    <property type="component" value="Segment"/>
</dbReference>
<dbReference type="GO" id="GO:0042025">
    <property type="term" value="C:host cell nucleus"/>
    <property type="evidence" value="ECO:0007669"/>
    <property type="project" value="UniProtKB-SubCell"/>
</dbReference>
<dbReference type="GO" id="GO:0019073">
    <property type="term" value="P:viral DNA genome packaging"/>
    <property type="evidence" value="ECO:0007669"/>
    <property type="project" value="InterPro"/>
</dbReference>
<dbReference type="HAMAP" id="MF_04015">
    <property type="entry name" value="HSV_TRM2"/>
    <property type="match status" value="1"/>
</dbReference>
<dbReference type="InterPro" id="IPR005208">
    <property type="entry name" value="Herpes_TT2"/>
</dbReference>
<dbReference type="Pfam" id="PF03581">
    <property type="entry name" value="Herpes_UL33"/>
    <property type="match status" value="1"/>
</dbReference>
<comment type="function">
    <text evidence="1">Component of the molecular motor that translocates viral genomic DNA in empty capsid during DNA packaging. Forms a tripartite terminase complex together with TRM1 and TRM3 in the host cytoplasm. Once the complex reaches the host nucleus, it interacts with the capsid portal vertex. This portal forms a ring in which genomic DNA is translocated into the capsid.</text>
</comment>
<comment type="subunit">
    <text evidence="1">Associates with TRM1 and TRM3 to form the tripartite terminase complex.</text>
</comment>
<comment type="subcellular location">
    <subcellularLocation>
        <location evidence="1">Host nucleus</location>
    </subcellularLocation>
    <text evidence="1">Found associated with the external surface of the viral capsid during assembly and DNA packaging, but seems absent in extracellular mature virions.</text>
</comment>
<comment type="similarity">
    <text evidence="1">Belongs to the herpesviridae TRM2 protein family.</text>
</comment>
<keyword id="KW-1048">Host nucleus</keyword>
<keyword id="KW-1185">Reference proteome</keyword>
<keyword id="KW-0231">Viral genome packaging</keyword>
<keyword id="KW-1188">Viral release from host cell</keyword>
<protein>
    <recommendedName>
        <fullName evidence="1">Tripartite terminase subunit 2</fullName>
    </recommendedName>
</protein>
<proteinExistence type="inferred from homology"/>
<name>TRM2_HHV6Z</name>